<proteinExistence type="inferred from homology"/>
<feature type="chain" id="PRO_0000172439" description="Large ribosomal subunit protein bL32">
    <location>
        <begin position="1"/>
        <end position="60"/>
    </location>
</feature>
<feature type="region of interest" description="Disordered" evidence="2">
    <location>
        <begin position="1"/>
        <end position="24"/>
    </location>
</feature>
<feature type="compositionally biased region" description="Basic residues" evidence="2">
    <location>
        <begin position="1"/>
        <end position="19"/>
    </location>
</feature>
<comment type="similarity">
    <text evidence="1">Belongs to the bacterial ribosomal protein bL32 family.</text>
</comment>
<reference key="1">
    <citation type="journal article" date="2004" name="PLoS Biol.">
        <title>Phylogenomics of the reproductive parasite Wolbachia pipientis wMel: a streamlined genome overrun by mobile genetic elements.</title>
        <authorList>
            <person name="Wu M."/>
            <person name="Sun L.V."/>
            <person name="Vamathevan J.J."/>
            <person name="Riegler M."/>
            <person name="DeBoy R.T."/>
            <person name="Brownlie J.C."/>
            <person name="McGraw E.A."/>
            <person name="Martin W."/>
            <person name="Esser C."/>
            <person name="Ahmadinejad N."/>
            <person name="Wiegand C."/>
            <person name="Madupu R."/>
            <person name="Beanan M.J."/>
            <person name="Brinkac L.M."/>
            <person name="Daugherty S.C."/>
            <person name="Durkin A.S."/>
            <person name="Kolonay J.F."/>
            <person name="Nelson W.C."/>
            <person name="Mohamoud Y."/>
            <person name="Lee P."/>
            <person name="Berry K.J."/>
            <person name="Young M.B."/>
            <person name="Utterback T.R."/>
            <person name="Weidman J.F."/>
            <person name="Nierman W.C."/>
            <person name="Paulsen I.T."/>
            <person name="Nelson K.E."/>
            <person name="Tettelin H."/>
            <person name="O'Neill S.L."/>
            <person name="Eisen J.A."/>
        </authorList>
    </citation>
    <scope>NUCLEOTIDE SEQUENCE [LARGE SCALE GENOMIC DNA]</scope>
</reference>
<sequence length="60" mass="6846">MAVPKRKKSKSRRNMHRSHHAIEPKNVVVCSTTGEFMLPHNVAVDGSYKGKRVFIKQQAE</sequence>
<name>RL32_WOLPM</name>
<dbReference type="EMBL" id="AE017196">
    <property type="protein sequence ID" value="AAS14649.1"/>
    <property type="molecule type" value="Genomic_DNA"/>
</dbReference>
<dbReference type="RefSeq" id="WP_010962967.1">
    <property type="nucleotide sequence ID" value="NZ_OX384529.1"/>
</dbReference>
<dbReference type="SMR" id="Q73GG7"/>
<dbReference type="EnsemblBacteria" id="AAS14649">
    <property type="protein sequence ID" value="AAS14649"/>
    <property type="gene ID" value="WD_0987"/>
</dbReference>
<dbReference type="GeneID" id="70036461"/>
<dbReference type="KEGG" id="wol:WD_0987"/>
<dbReference type="eggNOG" id="COG0333">
    <property type="taxonomic scope" value="Bacteria"/>
</dbReference>
<dbReference type="Proteomes" id="UP000008215">
    <property type="component" value="Chromosome"/>
</dbReference>
<dbReference type="GO" id="GO:0015934">
    <property type="term" value="C:large ribosomal subunit"/>
    <property type="evidence" value="ECO:0007669"/>
    <property type="project" value="InterPro"/>
</dbReference>
<dbReference type="GO" id="GO:0003735">
    <property type="term" value="F:structural constituent of ribosome"/>
    <property type="evidence" value="ECO:0007669"/>
    <property type="project" value="InterPro"/>
</dbReference>
<dbReference type="GO" id="GO:0006412">
    <property type="term" value="P:translation"/>
    <property type="evidence" value="ECO:0007669"/>
    <property type="project" value="UniProtKB-UniRule"/>
</dbReference>
<dbReference type="Gene3D" id="1.20.5.640">
    <property type="entry name" value="Single helix bin"/>
    <property type="match status" value="1"/>
</dbReference>
<dbReference type="HAMAP" id="MF_00340">
    <property type="entry name" value="Ribosomal_bL32"/>
    <property type="match status" value="1"/>
</dbReference>
<dbReference type="InterPro" id="IPR002677">
    <property type="entry name" value="Ribosomal_bL32"/>
</dbReference>
<dbReference type="InterPro" id="IPR044957">
    <property type="entry name" value="Ribosomal_bL32_bact"/>
</dbReference>
<dbReference type="InterPro" id="IPR011332">
    <property type="entry name" value="Ribosomal_zn-bd"/>
</dbReference>
<dbReference type="NCBIfam" id="TIGR01031">
    <property type="entry name" value="rpmF_bact"/>
    <property type="match status" value="1"/>
</dbReference>
<dbReference type="PANTHER" id="PTHR35534">
    <property type="entry name" value="50S RIBOSOMAL PROTEIN L32"/>
    <property type="match status" value="1"/>
</dbReference>
<dbReference type="PANTHER" id="PTHR35534:SF1">
    <property type="entry name" value="LARGE RIBOSOMAL SUBUNIT PROTEIN BL32"/>
    <property type="match status" value="1"/>
</dbReference>
<dbReference type="Pfam" id="PF01783">
    <property type="entry name" value="Ribosomal_L32p"/>
    <property type="match status" value="1"/>
</dbReference>
<dbReference type="SUPFAM" id="SSF57829">
    <property type="entry name" value="Zn-binding ribosomal proteins"/>
    <property type="match status" value="1"/>
</dbReference>
<evidence type="ECO:0000255" key="1">
    <source>
        <dbReference type="HAMAP-Rule" id="MF_00340"/>
    </source>
</evidence>
<evidence type="ECO:0000256" key="2">
    <source>
        <dbReference type="SAM" id="MobiDB-lite"/>
    </source>
</evidence>
<evidence type="ECO:0000305" key="3"/>
<organism>
    <name type="scientific">Wolbachia pipientis wMel</name>
    <dbReference type="NCBI Taxonomy" id="163164"/>
    <lineage>
        <taxon>Bacteria</taxon>
        <taxon>Pseudomonadati</taxon>
        <taxon>Pseudomonadota</taxon>
        <taxon>Alphaproteobacteria</taxon>
        <taxon>Rickettsiales</taxon>
        <taxon>Anaplasmataceae</taxon>
        <taxon>Wolbachieae</taxon>
        <taxon>Wolbachia</taxon>
    </lineage>
</organism>
<gene>
    <name evidence="1" type="primary">rpmF</name>
    <name type="ordered locus">WD_0987</name>
</gene>
<keyword id="KW-0687">Ribonucleoprotein</keyword>
<keyword id="KW-0689">Ribosomal protein</keyword>
<protein>
    <recommendedName>
        <fullName evidence="1">Large ribosomal subunit protein bL32</fullName>
    </recommendedName>
    <alternativeName>
        <fullName evidence="3">50S ribosomal protein L32</fullName>
    </alternativeName>
</protein>
<accession>Q73GG7</accession>